<proteinExistence type="evidence at protein level"/>
<protein>
    <recommendedName>
        <fullName evidence="3">Dihydroneopterin aldolase</fullName>
        <shortName>DHNA</shortName>
        <ecNumber evidence="2">4.1.2.25</ecNumber>
    </recommendedName>
    <alternativeName>
        <fullName>7,8-dihydroneopterin 2'-epimerase</fullName>
    </alternativeName>
    <alternativeName>
        <fullName>7,8-dihydroneopterin aldolase</fullName>
    </alternativeName>
    <alternativeName>
        <fullName>7,8-dihydroneopterin epimerase</fullName>
        <ecNumber evidence="2">5.1.99.8</ecNumber>
    </alternativeName>
    <alternativeName>
        <fullName>Dihydroneopterin epimerase</fullName>
    </alternativeName>
</protein>
<comment type="function">
    <text evidence="2">Catalyzes the conversion of 7,8-dihydroneopterin to 6-hydroxymethyl-7,8-dihydropterin. Can use L-threo-dihydroneopterin and D-erythro-dihydroneopterin as substrates for the formation of 6-hydroxymethyldihydropterin, but it can also catalyze the epimerization of carbon 2' of dihydroneopterin to dihydromonapterin.</text>
</comment>
<comment type="catalytic activity">
    <reaction evidence="2">
        <text>7,8-dihydroneopterin = 6-hydroxymethyl-7,8-dihydropterin + glycolaldehyde</text>
        <dbReference type="Rhea" id="RHEA:10540"/>
        <dbReference type="ChEBI" id="CHEBI:17001"/>
        <dbReference type="ChEBI" id="CHEBI:17071"/>
        <dbReference type="ChEBI" id="CHEBI:44841"/>
        <dbReference type="EC" id="4.1.2.25"/>
    </reaction>
</comment>
<comment type="catalytic activity">
    <reaction evidence="2">
        <text>7,8-dihydroneopterin = 7,8-dihydromonapterin</text>
        <dbReference type="Rhea" id="RHEA:45328"/>
        <dbReference type="ChEBI" id="CHEBI:17001"/>
        <dbReference type="ChEBI" id="CHEBI:71175"/>
        <dbReference type="EC" id="5.1.99.8"/>
    </reaction>
</comment>
<comment type="biophysicochemical properties">
    <kinetics>
        <KM evidence="2">21 uM for 7,8-dihydroneopterin in aldolase reaction</KM>
        <KM evidence="2">43 uM for 7,8-dihydroneopterin in epimerase reaction</KM>
        <KM evidence="2">16 uM for 7,8-dihydromonapterin in aldolase reaction</KM>
        <KM evidence="2">19 uM for 7,8-dihydromonapterin in epimerase reaction</KM>
        <Vmax evidence="2">242.0 umol/h/mg enzyme toward 7,8-dihydroneopterin in aldolase reaction</Vmax>
        <Vmax evidence="2">1.67 umol/h/mg enzyme toward 7,8-dihydroneopterin in epimerase reaction</Vmax>
        <Vmax evidence="2">9.9 umol/h/mg enzyme toward 7,8-dihydromonapterin in aldolase reaction</Vmax>
        <Vmax evidence="2">1.43 umol/h/mg enzyme toward 7,8-dihydromonapterin in epimerase reaction</Vmax>
    </kinetics>
</comment>
<comment type="pathway">
    <text>Cofactor biosynthesis; tetrahydrofolate biosynthesis; 2-amino-4-hydroxy-6-hydroxymethyl-7,8-dihydropteridine diphosphate from 7,8-dihydroneopterin triphosphate: step 3/4.</text>
</comment>
<comment type="similarity">
    <text evidence="4">Belongs to the DHNA family.</text>
</comment>
<dbReference type="EC" id="4.1.2.25" evidence="2"/>
<dbReference type="EC" id="5.1.99.8" evidence="2"/>
<dbReference type="EMBL" id="L42023">
    <property type="protein sequence ID" value="AAC21930.1"/>
    <property type="molecule type" value="Genomic_DNA"/>
</dbReference>
<dbReference type="RefSeq" id="NP_438434.1">
    <property type="nucleotide sequence ID" value="NC_000907.1"/>
</dbReference>
<dbReference type="SMR" id="P46362"/>
<dbReference type="STRING" id="71421.HI_0265"/>
<dbReference type="EnsemblBacteria" id="AAC21930">
    <property type="protein sequence ID" value="AAC21930"/>
    <property type="gene ID" value="HI_0265"/>
</dbReference>
<dbReference type="KEGG" id="hin:HI_0265"/>
<dbReference type="PATRIC" id="fig|71421.8.peg.280"/>
<dbReference type="eggNOG" id="COG1539">
    <property type="taxonomic scope" value="Bacteria"/>
</dbReference>
<dbReference type="HOGENOM" id="CLU_112632_0_2_6"/>
<dbReference type="OrthoDB" id="9810587at2"/>
<dbReference type="PhylomeDB" id="P46362"/>
<dbReference type="BioCyc" id="HINF71421:G1GJ1-280-MONOMER"/>
<dbReference type="SABIO-RK" id="P46362"/>
<dbReference type="UniPathway" id="UPA00077">
    <property type="reaction ID" value="UER00154"/>
</dbReference>
<dbReference type="Proteomes" id="UP000000579">
    <property type="component" value="Chromosome"/>
</dbReference>
<dbReference type="GO" id="GO:0005737">
    <property type="term" value="C:cytoplasm"/>
    <property type="evidence" value="ECO:0000318"/>
    <property type="project" value="GO_Central"/>
</dbReference>
<dbReference type="GO" id="GO:0004150">
    <property type="term" value="F:dihydroneopterin aldolase activity"/>
    <property type="evidence" value="ECO:0000318"/>
    <property type="project" value="GO_Central"/>
</dbReference>
<dbReference type="GO" id="GO:0016853">
    <property type="term" value="F:isomerase activity"/>
    <property type="evidence" value="ECO:0007669"/>
    <property type="project" value="UniProtKB-KW"/>
</dbReference>
<dbReference type="GO" id="GO:0046656">
    <property type="term" value="P:folic acid biosynthetic process"/>
    <property type="evidence" value="ECO:0007669"/>
    <property type="project" value="UniProtKB-KW"/>
</dbReference>
<dbReference type="GO" id="GO:0046654">
    <property type="term" value="P:tetrahydrofolate biosynthetic process"/>
    <property type="evidence" value="ECO:0007669"/>
    <property type="project" value="UniProtKB-UniPathway"/>
</dbReference>
<dbReference type="CDD" id="cd00534">
    <property type="entry name" value="DHNA_DHNTPE"/>
    <property type="match status" value="1"/>
</dbReference>
<dbReference type="FunFam" id="3.30.1130.10:FF:000002">
    <property type="entry name" value="7,8-dihydroneopterin aldolase"/>
    <property type="match status" value="1"/>
</dbReference>
<dbReference type="Gene3D" id="3.30.1130.10">
    <property type="match status" value="1"/>
</dbReference>
<dbReference type="InterPro" id="IPR006156">
    <property type="entry name" value="Dihydroneopterin_aldolase"/>
</dbReference>
<dbReference type="InterPro" id="IPR006157">
    <property type="entry name" value="FolB_dom"/>
</dbReference>
<dbReference type="InterPro" id="IPR043133">
    <property type="entry name" value="GTP-CH-I_C/QueF"/>
</dbReference>
<dbReference type="NCBIfam" id="TIGR00525">
    <property type="entry name" value="folB"/>
    <property type="match status" value="1"/>
</dbReference>
<dbReference type="NCBIfam" id="TIGR00526">
    <property type="entry name" value="folB_dom"/>
    <property type="match status" value="1"/>
</dbReference>
<dbReference type="PANTHER" id="PTHR42844">
    <property type="entry name" value="DIHYDRONEOPTERIN ALDOLASE 1-RELATED"/>
    <property type="match status" value="1"/>
</dbReference>
<dbReference type="PANTHER" id="PTHR42844:SF1">
    <property type="entry name" value="DIHYDRONEOPTERIN ALDOLASE 1-RELATED"/>
    <property type="match status" value="1"/>
</dbReference>
<dbReference type="Pfam" id="PF02152">
    <property type="entry name" value="FolB"/>
    <property type="match status" value="1"/>
</dbReference>
<dbReference type="SMART" id="SM00905">
    <property type="entry name" value="FolB"/>
    <property type="match status" value="1"/>
</dbReference>
<dbReference type="SUPFAM" id="SSF55620">
    <property type="entry name" value="Tetrahydrobiopterin biosynthesis enzymes-like"/>
    <property type="match status" value="1"/>
</dbReference>
<organism>
    <name type="scientific">Haemophilus influenzae (strain ATCC 51907 / DSM 11121 / KW20 / Rd)</name>
    <dbReference type="NCBI Taxonomy" id="71421"/>
    <lineage>
        <taxon>Bacteria</taxon>
        <taxon>Pseudomonadati</taxon>
        <taxon>Pseudomonadota</taxon>
        <taxon>Gammaproteobacteria</taxon>
        <taxon>Pasteurellales</taxon>
        <taxon>Pasteurellaceae</taxon>
        <taxon>Haemophilus</taxon>
    </lineage>
</organism>
<keyword id="KW-0289">Folate biosynthesis</keyword>
<keyword id="KW-0413">Isomerase</keyword>
<keyword id="KW-0456">Lyase</keyword>
<keyword id="KW-1185">Reference proteome</keyword>
<gene>
    <name type="primary">folB</name>
    <name type="ordered locus">HI_0265</name>
</gene>
<name>FOLB_HAEIN</name>
<feature type="chain" id="PRO_0000168272" description="Dihydroneopterin aldolase">
    <location>
        <begin position="1"/>
        <end position="118"/>
    </location>
</feature>
<feature type="active site" description="Proton donor/acceptor" evidence="1">
    <location>
        <position position="98"/>
    </location>
</feature>
<feature type="binding site" evidence="1">
    <location>
        <position position="21"/>
    </location>
    <ligand>
        <name>substrate</name>
    </ligand>
</feature>
<feature type="binding site" evidence="1">
    <location>
        <position position="53"/>
    </location>
    <ligand>
        <name>substrate</name>
    </ligand>
</feature>
<feature type="binding site" evidence="1">
    <location>
        <begin position="72"/>
        <end position="73"/>
    </location>
    <ligand>
        <name>substrate</name>
    </ligand>
</feature>
<accession>P46362</accession>
<sequence length="118" mass="13577">MDRVFIEELTVFAQIGVYDWEQQIKQKLVFDLEMAWDCKQAAETDDVVYCLNYAEVSQAIIDYVESKPFLLIERVAYEVADLLESRYQLQGLKIKLSKPKAVAQARNVGVLIVRGCLK</sequence>
<reference key="1">
    <citation type="journal article" date="1995" name="Science">
        <title>Whole-genome random sequencing and assembly of Haemophilus influenzae Rd.</title>
        <authorList>
            <person name="Fleischmann R.D."/>
            <person name="Adams M.D."/>
            <person name="White O."/>
            <person name="Clayton R.A."/>
            <person name="Kirkness E.F."/>
            <person name="Kerlavage A.R."/>
            <person name="Bult C.J."/>
            <person name="Tomb J.-F."/>
            <person name="Dougherty B.A."/>
            <person name="Merrick J.M."/>
            <person name="McKenney K."/>
            <person name="Sutton G.G."/>
            <person name="FitzHugh W."/>
            <person name="Fields C.A."/>
            <person name="Gocayne J.D."/>
            <person name="Scott J.D."/>
            <person name="Shirley R."/>
            <person name="Liu L.-I."/>
            <person name="Glodek A."/>
            <person name="Kelley J.M."/>
            <person name="Weidman J.F."/>
            <person name="Phillips C.A."/>
            <person name="Spriggs T."/>
            <person name="Hedblom E."/>
            <person name="Cotton M.D."/>
            <person name="Utterback T.R."/>
            <person name="Hanna M.C."/>
            <person name="Nguyen D.T."/>
            <person name="Saudek D.M."/>
            <person name="Brandon R.C."/>
            <person name="Fine L.D."/>
            <person name="Fritchman J.L."/>
            <person name="Fuhrmann J.L."/>
            <person name="Geoghagen N.S.M."/>
            <person name="Gnehm C.L."/>
            <person name="McDonald L.A."/>
            <person name="Small K.V."/>
            <person name="Fraser C.M."/>
            <person name="Smith H.O."/>
            <person name="Venter J.C."/>
        </authorList>
    </citation>
    <scope>NUCLEOTIDE SEQUENCE [LARGE SCALE GENOMIC DNA]</scope>
    <source>
        <strain>ATCC 51907 / DSM 11121 / KW20 / Rd</strain>
    </source>
</reference>
<reference key="2">
    <citation type="journal article" date="1998" name="J. Biol. Chem.">
        <title>Biosynthesis of pteridines in Escherichia coli. Structural and mechanistic similarity of dihydroneopterin-triphosphate epimerase and dihydroneopterin aldolase.</title>
        <authorList>
            <person name="Haussmann C."/>
            <person name="Rohdich F."/>
            <person name="Schmidt E."/>
            <person name="Bacher A."/>
            <person name="Richter G."/>
        </authorList>
    </citation>
    <scope>FUNCTION</scope>
    <scope>CATALYTIC ACTIVITY</scope>
    <scope>BIOPHYSICOCHEMICAL PROPERTIES</scope>
    <scope>REACTION MECHANISM</scope>
</reference>
<evidence type="ECO:0000250" key="1">
    <source>
        <dbReference type="UniProtKB" id="P0AC16"/>
    </source>
</evidence>
<evidence type="ECO:0000269" key="2">
    <source>
    </source>
</evidence>
<evidence type="ECO:0000303" key="3">
    <source>
    </source>
</evidence>
<evidence type="ECO:0000305" key="4"/>